<sequence length="369" mass="40109">MNNHSETESSGHNSVHGNNDNIPGWNEELELAFSAYKGLYLAGRISSRHKTVCEVLVPGAVVQAGISGALQRIGKQPVVGDFVVLLDQPETGSRMVVNILPRRTCLSRGAAGDGGGEQLIAANLDTIFIVTSVGKDLNLRRLERYLAIVYSSGASPVILLNKIDLADDPARLVEKIRDVTGDVPVIPLSALSKTGLDALGPYLNPGETVALVGSSGVGKSTLINAFLGETVQKTADIRKDDEKGRHTTTVRQMFLLPNGAVLIDNPGIREIQLGDSAEGLEKAFSEIVDAARNCKFKDCTHRNEPGCAVLQAVRDGIIPEERLESYHRLTDELSFQSKKAEIGLKRLEKERYREMAVNIKKYRKFTGKP</sequence>
<evidence type="ECO:0000255" key="1">
    <source>
        <dbReference type="HAMAP-Rule" id="MF_01820"/>
    </source>
</evidence>
<evidence type="ECO:0000255" key="2">
    <source>
        <dbReference type="PROSITE-ProRule" id="PRU01058"/>
    </source>
</evidence>
<name>RSGA_METAC</name>
<organism>
    <name type="scientific">Methanosarcina acetivorans (strain ATCC 35395 / DSM 2834 / JCM 12185 / C2A)</name>
    <dbReference type="NCBI Taxonomy" id="188937"/>
    <lineage>
        <taxon>Archaea</taxon>
        <taxon>Methanobacteriati</taxon>
        <taxon>Methanobacteriota</taxon>
        <taxon>Stenosarchaea group</taxon>
        <taxon>Methanomicrobia</taxon>
        <taxon>Methanosarcinales</taxon>
        <taxon>Methanosarcinaceae</taxon>
        <taxon>Methanosarcina</taxon>
    </lineage>
</organism>
<proteinExistence type="inferred from homology"/>
<feature type="chain" id="PRO_0000171550" description="Small ribosomal subunit biogenesis GTPase RsgA">
    <location>
        <begin position="1"/>
        <end position="369"/>
    </location>
</feature>
<feature type="domain" description="CP-type G" evidence="2">
    <location>
        <begin position="116"/>
        <end position="271"/>
    </location>
</feature>
<feature type="binding site" evidence="1">
    <location>
        <begin position="161"/>
        <end position="164"/>
    </location>
    <ligand>
        <name>GTP</name>
        <dbReference type="ChEBI" id="CHEBI:37565"/>
    </ligand>
</feature>
<feature type="binding site" evidence="1">
    <location>
        <begin position="213"/>
        <end position="221"/>
    </location>
    <ligand>
        <name>GTP</name>
        <dbReference type="ChEBI" id="CHEBI:37565"/>
    </ligand>
</feature>
<feature type="binding site" evidence="1">
    <location>
        <position position="294"/>
    </location>
    <ligand>
        <name>Zn(2+)</name>
        <dbReference type="ChEBI" id="CHEBI:29105"/>
    </ligand>
</feature>
<feature type="binding site" evidence="1">
    <location>
        <position position="299"/>
    </location>
    <ligand>
        <name>Zn(2+)</name>
        <dbReference type="ChEBI" id="CHEBI:29105"/>
    </ligand>
</feature>
<feature type="binding site" evidence="1">
    <location>
        <position position="301"/>
    </location>
    <ligand>
        <name>Zn(2+)</name>
        <dbReference type="ChEBI" id="CHEBI:29105"/>
    </ligand>
</feature>
<feature type="binding site" evidence="1">
    <location>
        <position position="307"/>
    </location>
    <ligand>
        <name>Zn(2+)</name>
        <dbReference type="ChEBI" id="CHEBI:29105"/>
    </ligand>
</feature>
<protein>
    <recommendedName>
        <fullName evidence="1">Small ribosomal subunit biogenesis GTPase RsgA</fullName>
        <ecNumber evidence="1">3.6.1.-</ecNumber>
    </recommendedName>
</protein>
<gene>
    <name evidence="1" type="primary">rsgA</name>
    <name type="ordered locus">MA_3445</name>
</gene>
<keyword id="KW-0963">Cytoplasm</keyword>
<keyword id="KW-0342">GTP-binding</keyword>
<keyword id="KW-0378">Hydrolase</keyword>
<keyword id="KW-0479">Metal-binding</keyword>
<keyword id="KW-0547">Nucleotide-binding</keyword>
<keyword id="KW-1185">Reference proteome</keyword>
<keyword id="KW-0690">Ribosome biogenesis</keyword>
<keyword id="KW-0694">RNA-binding</keyword>
<keyword id="KW-0699">rRNA-binding</keyword>
<keyword id="KW-0862">Zinc</keyword>
<dbReference type="EC" id="3.6.1.-" evidence="1"/>
<dbReference type="EMBL" id="AE010299">
    <property type="protein sequence ID" value="AAM06812.1"/>
    <property type="molecule type" value="Genomic_DNA"/>
</dbReference>
<dbReference type="RefSeq" id="WP_011023368.1">
    <property type="nucleotide sequence ID" value="NC_003552.1"/>
</dbReference>
<dbReference type="SMR" id="Q8TKG2"/>
<dbReference type="STRING" id="188937.MA_3445"/>
<dbReference type="EnsemblBacteria" id="AAM06812">
    <property type="protein sequence ID" value="AAM06812"/>
    <property type="gene ID" value="MA_3445"/>
</dbReference>
<dbReference type="GeneID" id="1475338"/>
<dbReference type="KEGG" id="mac:MA_3445"/>
<dbReference type="HOGENOM" id="CLU_033617_0_1_2"/>
<dbReference type="InParanoid" id="Q8TKG2"/>
<dbReference type="OrthoDB" id="69796at2157"/>
<dbReference type="PhylomeDB" id="Q8TKG2"/>
<dbReference type="Proteomes" id="UP000002487">
    <property type="component" value="Chromosome"/>
</dbReference>
<dbReference type="GO" id="GO:0005737">
    <property type="term" value="C:cytoplasm"/>
    <property type="evidence" value="ECO:0007669"/>
    <property type="project" value="UniProtKB-SubCell"/>
</dbReference>
<dbReference type="GO" id="GO:0005525">
    <property type="term" value="F:GTP binding"/>
    <property type="evidence" value="ECO:0007669"/>
    <property type="project" value="UniProtKB-UniRule"/>
</dbReference>
<dbReference type="GO" id="GO:0003924">
    <property type="term" value="F:GTPase activity"/>
    <property type="evidence" value="ECO:0007669"/>
    <property type="project" value="UniProtKB-UniRule"/>
</dbReference>
<dbReference type="GO" id="GO:0046872">
    <property type="term" value="F:metal ion binding"/>
    <property type="evidence" value="ECO:0007669"/>
    <property type="project" value="UniProtKB-KW"/>
</dbReference>
<dbReference type="GO" id="GO:0019843">
    <property type="term" value="F:rRNA binding"/>
    <property type="evidence" value="ECO:0007669"/>
    <property type="project" value="UniProtKB-KW"/>
</dbReference>
<dbReference type="GO" id="GO:0042274">
    <property type="term" value="P:ribosomal small subunit biogenesis"/>
    <property type="evidence" value="ECO:0007669"/>
    <property type="project" value="UniProtKB-UniRule"/>
</dbReference>
<dbReference type="CDD" id="cd01854">
    <property type="entry name" value="YjeQ_EngC"/>
    <property type="match status" value="1"/>
</dbReference>
<dbReference type="Gene3D" id="3.40.50.300">
    <property type="entry name" value="P-loop containing nucleotide triphosphate hydrolases"/>
    <property type="match status" value="1"/>
</dbReference>
<dbReference type="Gene3D" id="1.10.40.50">
    <property type="entry name" value="Probable gtpase engc, domain 3"/>
    <property type="match status" value="1"/>
</dbReference>
<dbReference type="HAMAP" id="MF_01820">
    <property type="entry name" value="GTPase_RsgA"/>
    <property type="match status" value="1"/>
</dbReference>
<dbReference type="InterPro" id="IPR030378">
    <property type="entry name" value="G_CP_dom"/>
</dbReference>
<dbReference type="InterPro" id="IPR027417">
    <property type="entry name" value="P-loop_NTPase"/>
</dbReference>
<dbReference type="InterPro" id="IPR004881">
    <property type="entry name" value="Ribosome_biogen_GTPase_RsgA"/>
</dbReference>
<dbReference type="InterPro" id="IPR010914">
    <property type="entry name" value="RsgA_GTPase_dom"/>
</dbReference>
<dbReference type="NCBIfam" id="TIGR00157">
    <property type="entry name" value="ribosome small subunit-dependent GTPase A"/>
    <property type="match status" value="1"/>
</dbReference>
<dbReference type="PANTHER" id="PTHR32120">
    <property type="entry name" value="SMALL RIBOSOMAL SUBUNIT BIOGENESIS GTPASE RSGA"/>
    <property type="match status" value="1"/>
</dbReference>
<dbReference type="PANTHER" id="PTHR32120:SF10">
    <property type="entry name" value="SMALL RIBOSOMAL SUBUNIT BIOGENESIS GTPASE RSGA"/>
    <property type="match status" value="1"/>
</dbReference>
<dbReference type="Pfam" id="PF03193">
    <property type="entry name" value="RsgA_GTPase"/>
    <property type="match status" value="1"/>
</dbReference>
<dbReference type="SUPFAM" id="SSF52540">
    <property type="entry name" value="P-loop containing nucleoside triphosphate hydrolases"/>
    <property type="match status" value="1"/>
</dbReference>
<dbReference type="PROSITE" id="PS50936">
    <property type="entry name" value="ENGC_GTPASE"/>
    <property type="match status" value="1"/>
</dbReference>
<dbReference type="PROSITE" id="PS51721">
    <property type="entry name" value="G_CP"/>
    <property type="match status" value="1"/>
</dbReference>
<comment type="function">
    <text evidence="1">One of several proteins that assist in the late maturation steps of the functional core of the 30S ribosomal subunit. Helps release RbfA from mature subunits. May play a role in the assembly of ribosomal proteins into the subunit. Circularly permuted GTPase that catalyzes slow GTP hydrolysis, GTPase activity is stimulated by the 30S ribosomal subunit.</text>
</comment>
<comment type="cofactor">
    <cofactor evidence="1">
        <name>Zn(2+)</name>
        <dbReference type="ChEBI" id="CHEBI:29105"/>
    </cofactor>
    <text evidence="1">Binds 1 zinc ion per subunit.</text>
</comment>
<comment type="subunit">
    <text evidence="1">Monomer. Associates with 30S ribosomal subunit, binds 16S rRNA.</text>
</comment>
<comment type="subcellular location">
    <subcellularLocation>
        <location evidence="1">Cytoplasm</location>
    </subcellularLocation>
</comment>
<comment type="similarity">
    <text evidence="1">Belongs to the TRAFAC class YlqF/YawG GTPase family. RsgA subfamily.</text>
</comment>
<accession>Q8TKG2</accession>
<reference key="1">
    <citation type="journal article" date="2002" name="Genome Res.">
        <title>The genome of Methanosarcina acetivorans reveals extensive metabolic and physiological diversity.</title>
        <authorList>
            <person name="Galagan J.E."/>
            <person name="Nusbaum C."/>
            <person name="Roy A."/>
            <person name="Endrizzi M.G."/>
            <person name="Macdonald P."/>
            <person name="FitzHugh W."/>
            <person name="Calvo S."/>
            <person name="Engels R."/>
            <person name="Smirnov S."/>
            <person name="Atnoor D."/>
            <person name="Brown A."/>
            <person name="Allen N."/>
            <person name="Naylor J."/>
            <person name="Stange-Thomann N."/>
            <person name="DeArellano K."/>
            <person name="Johnson R."/>
            <person name="Linton L."/>
            <person name="McEwan P."/>
            <person name="McKernan K."/>
            <person name="Talamas J."/>
            <person name="Tirrell A."/>
            <person name="Ye W."/>
            <person name="Zimmer A."/>
            <person name="Barber R.D."/>
            <person name="Cann I."/>
            <person name="Graham D.E."/>
            <person name="Grahame D.A."/>
            <person name="Guss A.M."/>
            <person name="Hedderich R."/>
            <person name="Ingram-Smith C."/>
            <person name="Kuettner H.C."/>
            <person name="Krzycki J.A."/>
            <person name="Leigh J.A."/>
            <person name="Li W."/>
            <person name="Liu J."/>
            <person name="Mukhopadhyay B."/>
            <person name="Reeve J.N."/>
            <person name="Smith K."/>
            <person name="Springer T.A."/>
            <person name="Umayam L.A."/>
            <person name="White O."/>
            <person name="White R.H."/>
            <person name="de Macario E.C."/>
            <person name="Ferry J.G."/>
            <person name="Jarrell K.F."/>
            <person name="Jing H."/>
            <person name="Macario A.J.L."/>
            <person name="Paulsen I.T."/>
            <person name="Pritchett M."/>
            <person name="Sowers K.R."/>
            <person name="Swanson R.V."/>
            <person name="Zinder S.H."/>
            <person name="Lander E."/>
            <person name="Metcalf W.W."/>
            <person name="Birren B."/>
        </authorList>
    </citation>
    <scope>NUCLEOTIDE SEQUENCE [LARGE SCALE GENOMIC DNA]</scope>
    <source>
        <strain>ATCC 35395 / DSM 2834 / JCM 12185 / C2A</strain>
    </source>
</reference>